<keyword id="KW-0067">ATP-binding</keyword>
<keyword id="KW-0342">GTP-binding</keyword>
<keyword id="KW-0418">Kinase</keyword>
<keyword id="KW-0511">Multifunctional enzyme</keyword>
<keyword id="KW-0547">Nucleotide-binding</keyword>
<keyword id="KW-0548">Nucleotidyltransferase</keyword>
<keyword id="KW-1185">Reference proteome</keyword>
<keyword id="KW-0808">Transferase</keyword>
<gene>
    <name type="primary">cysNC</name>
    <name type="synonym">cysC</name>
    <name type="synonym">cysN</name>
    <name type="ordered locus">RB7941</name>
</gene>
<proteinExistence type="inferred from homology"/>
<accession>Q7UMW2</accession>
<evidence type="ECO:0000250" key="1"/>
<evidence type="ECO:0000255" key="2"/>
<evidence type="ECO:0000305" key="3"/>
<reference key="1">
    <citation type="journal article" date="2003" name="Proc. Natl. Acad. Sci. U.S.A.">
        <title>Complete genome sequence of the marine planctomycete Pirellula sp. strain 1.</title>
        <authorList>
            <person name="Gloeckner F.O."/>
            <person name="Kube M."/>
            <person name="Bauer M."/>
            <person name="Teeling H."/>
            <person name="Lombardot T."/>
            <person name="Ludwig W."/>
            <person name="Gade D."/>
            <person name="Beck A."/>
            <person name="Borzym K."/>
            <person name="Heitmann K."/>
            <person name="Rabus R."/>
            <person name="Schlesner H."/>
            <person name="Amann R."/>
            <person name="Reinhardt R."/>
        </authorList>
    </citation>
    <scope>NUCLEOTIDE SEQUENCE [LARGE SCALE GENOMIC DNA]</scope>
    <source>
        <strain>DSM 10527 / NCIMB 13988 / SH1</strain>
    </source>
</reference>
<sequence>MSHQSDLIATDIDAYLKQHEQKQLLRFITCGSVDDGKSTLIGRLLYDSKLVYEDELAKVQSDSVRQGSVAGGFDPSLFMDGLKEEREQGITIDVAYRYFSTAKRKFIIADTPGHEQYTRNMATGASSADLAIILIDARHGVLTQTRRHSFIVSLLGIRHVVVAVNKMDIDGVDYSEDRFNEICDDYRSFATRLDLPDLHFIPISALNGDNLVDRSENMPWYTGSTLMNFLETVYIGSDRNLQDFRLPVQLVNRPNLNFRGFCGTIASGIIRKGEEITVLPSRQKSKVKEIVTYDGNLDEAYAPLAVTLTLEDEIDASRGDMIVRSGNLPRSESDVEAMLVWMNEEAMVPGKTYLVKHSTQTVPGNVETLAYKVDVNDLHRMPAPTLELNEIGRVRLSLSAPIHHDPYRRNRTTGAIILVDRITNATVAAGMILDRGTTGSHKSVWDDEVSTDDSSDALSTVTTEERAARFGQKPATVLLTGLTGSGKTSIARAVERKLFDAGRSVAVVDGEFVRRGLSRDLGFSADDRSENLRRSGHLAHTLNDAGLICLASLVAPSDDVRQKVGKLIGEDQFLVVHVATPLDVCRERDTKGQYAKADAGELSNFPGVTAKYDVPTNPDLAVDASTTSIAECADAVVELLKLKGFIK</sequence>
<name>CYSNC_RHOBA</name>
<protein>
    <recommendedName>
        <fullName>Bifunctional enzyme CysN/CysC</fullName>
    </recommendedName>
    <domain>
        <recommendedName>
            <fullName>Sulfate adenylyltransferase subunit 1</fullName>
            <ecNumber>2.7.7.4</ecNumber>
        </recommendedName>
        <alternativeName>
            <fullName>ATP-sulfurylase large subunit</fullName>
        </alternativeName>
        <alternativeName>
            <fullName>Sulfate adenylate transferase</fullName>
            <shortName>SAT</shortName>
        </alternativeName>
    </domain>
    <domain>
        <recommendedName>
            <fullName>Adenylyl-sulfate kinase</fullName>
            <ecNumber>2.7.1.25</ecNumber>
        </recommendedName>
        <alternativeName>
            <fullName>APS kinase</fullName>
        </alternativeName>
        <alternativeName>
            <fullName>ATP adenosine-5'-phosphosulfate 3'-phosphotransferase</fullName>
        </alternativeName>
    </domain>
</protein>
<dbReference type="EC" id="2.7.7.4"/>
<dbReference type="EC" id="2.7.1.25"/>
<dbReference type="EMBL" id="BX294146">
    <property type="protein sequence ID" value="CAD75662.1"/>
    <property type="molecule type" value="Genomic_DNA"/>
</dbReference>
<dbReference type="RefSeq" id="NP_868110.1">
    <property type="nucleotide sequence ID" value="NC_005027.1"/>
</dbReference>
<dbReference type="RefSeq" id="WP_011121644.1">
    <property type="nucleotide sequence ID" value="NC_005027.1"/>
</dbReference>
<dbReference type="SMR" id="Q7UMW2"/>
<dbReference type="FunCoup" id="Q7UMW2">
    <property type="interactions" value="336"/>
</dbReference>
<dbReference type="STRING" id="243090.RB7941"/>
<dbReference type="EnsemblBacteria" id="CAD75662">
    <property type="protein sequence ID" value="CAD75662"/>
    <property type="gene ID" value="RB7941"/>
</dbReference>
<dbReference type="KEGG" id="rba:RB7941"/>
<dbReference type="PATRIC" id="fig|243090.15.peg.3838"/>
<dbReference type="eggNOG" id="COG0529">
    <property type="taxonomic scope" value="Bacteria"/>
</dbReference>
<dbReference type="eggNOG" id="COG2895">
    <property type="taxonomic scope" value="Bacteria"/>
</dbReference>
<dbReference type="HOGENOM" id="CLU_007265_5_3_0"/>
<dbReference type="InParanoid" id="Q7UMW2"/>
<dbReference type="OrthoDB" id="9804504at2"/>
<dbReference type="UniPathway" id="UPA00140">
    <property type="reaction ID" value="UER00204"/>
</dbReference>
<dbReference type="UniPathway" id="UPA00140">
    <property type="reaction ID" value="UER00205"/>
</dbReference>
<dbReference type="Proteomes" id="UP000001025">
    <property type="component" value="Chromosome"/>
</dbReference>
<dbReference type="GO" id="GO:0004020">
    <property type="term" value="F:adenylylsulfate kinase activity"/>
    <property type="evidence" value="ECO:0007669"/>
    <property type="project" value="UniProtKB-UniRule"/>
</dbReference>
<dbReference type="GO" id="GO:0005524">
    <property type="term" value="F:ATP binding"/>
    <property type="evidence" value="ECO:0007669"/>
    <property type="project" value="UniProtKB-UniRule"/>
</dbReference>
<dbReference type="GO" id="GO:0005525">
    <property type="term" value="F:GTP binding"/>
    <property type="evidence" value="ECO:0007669"/>
    <property type="project" value="UniProtKB-UniRule"/>
</dbReference>
<dbReference type="GO" id="GO:0003924">
    <property type="term" value="F:GTPase activity"/>
    <property type="evidence" value="ECO:0007669"/>
    <property type="project" value="InterPro"/>
</dbReference>
<dbReference type="GO" id="GO:0004781">
    <property type="term" value="F:sulfate adenylyltransferase (ATP) activity"/>
    <property type="evidence" value="ECO:0007669"/>
    <property type="project" value="UniProtKB-UniRule"/>
</dbReference>
<dbReference type="GO" id="GO:0070814">
    <property type="term" value="P:hydrogen sulfide biosynthetic process"/>
    <property type="evidence" value="ECO:0007669"/>
    <property type="project" value="UniProtKB-UniRule"/>
</dbReference>
<dbReference type="GO" id="GO:0000103">
    <property type="term" value="P:sulfate assimilation"/>
    <property type="evidence" value="ECO:0007669"/>
    <property type="project" value="UniProtKB-UniRule"/>
</dbReference>
<dbReference type="GO" id="GO:0006790">
    <property type="term" value="P:sulfur compound metabolic process"/>
    <property type="evidence" value="ECO:0000318"/>
    <property type="project" value="GO_Central"/>
</dbReference>
<dbReference type="CDD" id="cd02027">
    <property type="entry name" value="APSK"/>
    <property type="match status" value="1"/>
</dbReference>
<dbReference type="CDD" id="cd04166">
    <property type="entry name" value="CysN_ATPS"/>
    <property type="match status" value="1"/>
</dbReference>
<dbReference type="CDD" id="cd03695">
    <property type="entry name" value="CysN_NodQ_II"/>
    <property type="match status" value="1"/>
</dbReference>
<dbReference type="CDD" id="cd04095">
    <property type="entry name" value="CysN_NoDQ_III"/>
    <property type="match status" value="1"/>
</dbReference>
<dbReference type="FunFam" id="2.40.30.10:FF:000027">
    <property type="entry name" value="Sulfate adenylyltransferase subunit 1"/>
    <property type="match status" value="1"/>
</dbReference>
<dbReference type="FunFam" id="3.40.50.300:FF:000119">
    <property type="entry name" value="Sulfate adenylyltransferase subunit 1"/>
    <property type="match status" value="1"/>
</dbReference>
<dbReference type="Gene3D" id="3.40.50.300">
    <property type="entry name" value="P-loop containing nucleotide triphosphate hydrolases"/>
    <property type="match status" value="2"/>
</dbReference>
<dbReference type="Gene3D" id="2.40.30.10">
    <property type="entry name" value="Translation factors"/>
    <property type="match status" value="2"/>
</dbReference>
<dbReference type="HAMAP" id="MF_00065">
    <property type="entry name" value="Adenylyl_sulf_kinase"/>
    <property type="match status" value="1"/>
</dbReference>
<dbReference type="HAMAP" id="MF_00062">
    <property type="entry name" value="Sulf_adenylyltr_sub1"/>
    <property type="match status" value="1"/>
</dbReference>
<dbReference type="InterPro" id="IPR002891">
    <property type="entry name" value="APS_kinase"/>
</dbReference>
<dbReference type="InterPro" id="IPR041757">
    <property type="entry name" value="CysN_GTP-bd"/>
</dbReference>
<dbReference type="InterPro" id="IPR044138">
    <property type="entry name" value="CysN_II"/>
</dbReference>
<dbReference type="InterPro" id="IPR044139">
    <property type="entry name" value="CysN_NoDQ_III"/>
</dbReference>
<dbReference type="InterPro" id="IPR031157">
    <property type="entry name" value="G_TR_CS"/>
</dbReference>
<dbReference type="InterPro" id="IPR054696">
    <property type="entry name" value="GTP-eEF1A_C"/>
</dbReference>
<dbReference type="InterPro" id="IPR027417">
    <property type="entry name" value="P-loop_NTPase"/>
</dbReference>
<dbReference type="InterPro" id="IPR011779">
    <property type="entry name" value="SO4_adenylTrfase_lsu"/>
</dbReference>
<dbReference type="InterPro" id="IPR000795">
    <property type="entry name" value="T_Tr_GTP-bd_dom"/>
</dbReference>
<dbReference type="InterPro" id="IPR050100">
    <property type="entry name" value="TRAFAC_GTPase_members"/>
</dbReference>
<dbReference type="InterPro" id="IPR009000">
    <property type="entry name" value="Transl_B-barrel_sf"/>
</dbReference>
<dbReference type="InterPro" id="IPR009001">
    <property type="entry name" value="Transl_elong_EF1A/Init_IF2_C"/>
</dbReference>
<dbReference type="NCBIfam" id="TIGR00455">
    <property type="entry name" value="apsK"/>
    <property type="match status" value="1"/>
</dbReference>
<dbReference type="NCBIfam" id="TIGR02034">
    <property type="entry name" value="CysN"/>
    <property type="match status" value="1"/>
</dbReference>
<dbReference type="NCBIfam" id="NF003013">
    <property type="entry name" value="PRK03846.1"/>
    <property type="match status" value="1"/>
</dbReference>
<dbReference type="NCBIfam" id="NF003478">
    <property type="entry name" value="PRK05124.1"/>
    <property type="match status" value="1"/>
</dbReference>
<dbReference type="NCBIfam" id="NF004035">
    <property type="entry name" value="PRK05506.1"/>
    <property type="match status" value="1"/>
</dbReference>
<dbReference type="PANTHER" id="PTHR23115">
    <property type="entry name" value="TRANSLATION FACTOR"/>
    <property type="match status" value="1"/>
</dbReference>
<dbReference type="Pfam" id="PF01583">
    <property type="entry name" value="APS_kinase"/>
    <property type="match status" value="1"/>
</dbReference>
<dbReference type="Pfam" id="PF22594">
    <property type="entry name" value="GTP-eEF1A_C"/>
    <property type="match status" value="1"/>
</dbReference>
<dbReference type="Pfam" id="PF00009">
    <property type="entry name" value="GTP_EFTU"/>
    <property type="match status" value="1"/>
</dbReference>
<dbReference type="PRINTS" id="PR00315">
    <property type="entry name" value="ELONGATNFCT"/>
</dbReference>
<dbReference type="SUPFAM" id="SSF50465">
    <property type="entry name" value="EF-Tu/eEF-1alpha/eIF2-gamma C-terminal domain"/>
    <property type="match status" value="1"/>
</dbReference>
<dbReference type="SUPFAM" id="SSF52540">
    <property type="entry name" value="P-loop containing nucleoside triphosphate hydrolases"/>
    <property type="match status" value="2"/>
</dbReference>
<dbReference type="SUPFAM" id="SSF50447">
    <property type="entry name" value="Translation proteins"/>
    <property type="match status" value="1"/>
</dbReference>
<dbReference type="PROSITE" id="PS00301">
    <property type="entry name" value="G_TR_1"/>
    <property type="match status" value="1"/>
</dbReference>
<dbReference type="PROSITE" id="PS51722">
    <property type="entry name" value="G_TR_2"/>
    <property type="match status" value="1"/>
</dbReference>
<feature type="chain" id="PRO_0000239080" description="Bifunctional enzyme CysN/CysC">
    <location>
        <begin position="1"/>
        <end position="647"/>
    </location>
</feature>
<feature type="domain" description="tr-type G">
    <location>
        <begin position="22"/>
        <end position="239"/>
    </location>
</feature>
<feature type="region of interest" description="Sulfate adenylyltransferase">
    <location>
        <begin position="1"/>
        <end position="472"/>
    </location>
</feature>
<feature type="region of interest" description="G1" evidence="1">
    <location>
        <begin position="31"/>
        <end position="38"/>
    </location>
</feature>
<feature type="region of interest" description="G2" evidence="1">
    <location>
        <begin position="89"/>
        <end position="93"/>
    </location>
</feature>
<feature type="region of interest" description="G3" evidence="1">
    <location>
        <begin position="110"/>
        <end position="113"/>
    </location>
</feature>
<feature type="region of interest" description="G4" evidence="1">
    <location>
        <begin position="165"/>
        <end position="168"/>
    </location>
</feature>
<feature type="region of interest" description="G5" evidence="1">
    <location>
        <begin position="204"/>
        <end position="206"/>
    </location>
</feature>
<feature type="region of interest" description="Adenylyl-sulfate kinase">
    <location>
        <begin position="473"/>
        <end position="614"/>
    </location>
</feature>
<feature type="binding site" evidence="1">
    <location>
        <begin position="31"/>
        <end position="38"/>
    </location>
    <ligand>
        <name>GTP</name>
        <dbReference type="ChEBI" id="CHEBI:37565"/>
    </ligand>
</feature>
<feature type="binding site" evidence="1">
    <location>
        <begin position="110"/>
        <end position="114"/>
    </location>
    <ligand>
        <name>GTP</name>
        <dbReference type="ChEBI" id="CHEBI:37565"/>
    </ligand>
</feature>
<feature type="binding site" evidence="1">
    <location>
        <begin position="165"/>
        <end position="168"/>
    </location>
    <ligand>
        <name>GTP</name>
        <dbReference type="ChEBI" id="CHEBI:37565"/>
    </ligand>
</feature>
<feature type="binding site" evidence="2">
    <location>
        <begin position="481"/>
        <end position="488"/>
    </location>
    <ligand>
        <name>ATP</name>
        <dbReference type="ChEBI" id="CHEBI:30616"/>
    </ligand>
</feature>
<comment type="function">
    <text evidence="1">With CysD forms the ATP sulfurylase (ATPS) that catalyzes the adenylation of sulfate producing adenosine 5'-phosphosulfate (APS) and diphosphate, the first enzymatic step in sulfur assimilation pathway. APS synthesis involves the formation of a high-energy phosphoric-sulfuric acid anhydride bond driven by GTP hydrolysis by CysN coupled to ATP hydrolysis by CysD.</text>
</comment>
<comment type="function">
    <text evidence="1">APS kinase catalyzes the synthesis of activated sulfate.</text>
</comment>
<comment type="catalytic activity">
    <reaction>
        <text>sulfate + ATP + H(+) = adenosine 5'-phosphosulfate + diphosphate</text>
        <dbReference type="Rhea" id="RHEA:18133"/>
        <dbReference type="ChEBI" id="CHEBI:15378"/>
        <dbReference type="ChEBI" id="CHEBI:16189"/>
        <dbReference type="ChEBI" id="CHEBI:30616"/>
        <dbReference type="ChEBI" id="CHEBI:33019"/>
        <dbReference type="ChEBI" id="CHEBI:58243"/>
        <dbReference type="EC" id="2.7.7.4"/>
    </reaction>
</comment>
<comment type="catalytic activity">
    <reaction>
        <text>adenosine 5'-phosphosulfate + ATP = 3'-phosphoadenylyl sulfate + ADP + H(+)</text>
        <dbReference type="Rhea" id="RHEA:24152"/>
        <dbReference type="ChEBI" id="CHEBI:15378"/>
        <dbReference type="ChEBI" id="CHEBI:30616"/>
        <dbReference type="ChEBI" id="CHEBI:58243"/>
        <dbReference type="ChEBI" id="CHEBI:58339"/>
        <dbReference type="ChEBI" id="CHEBI:456216"/>
        <dbReference type="EC" id="2.7.1.25"/>
    </reaction>
</comment>
<comment type="pathway">
    <text>Sulfur metabolism; hydrogen sulfide biosynthesis; sulfite from sulfate: step 1/3.</text>
</comment>
<comment type="pathway">
    <text>Sulfur metabolism; hydrogen sulfide biosynthesis; sulfite from sulfate: step 2/3.</text>
</comment>
<comment type="subunit">
    <text evidence="1">Heterodimer composed of CysD, the smaller subunit, and CysNC.</text>
</comment>
<comment type="similarity">
    <text evidence="3">In the C-terminal section; belongs to the APS kinase family.</text>
</comment>
<comment type="similarity">
    <text evidence="3">In the N-terminal section; belongs to the TRAFAC class translation factor GTPase superfamily. Classic translation factor GTPase family. CysN/NodQ subfamily.</text>
</comment>
<comment type="caution">
    <text evidence="3">It is not obvious if the APS kinase domain is functional; there is an Ala-555 replacing the conserved active site Ser. Furthermore R.baltica seems to harbor a bona fide single domain APS kinase (CysC).</text>
</comment>
<organism>
    <name type="scientific">Rhodopirellula baltica (strain DSM 10527 / NCIMB 13988 / SH1)</name>
    <dbReference type="NCBI Taxonomy" id="243090"/>
    <lineage>
        <taxon>Bacteria</taxon>
        <taxon>Pseudomonadati</taxon>
        <taxon>Planctomycetota</taxon>
        <taxon>Planctomycetia</taxon>
        <taxon>Pirellulales</taxon>
        <taxon>Pirellulaceae</taxon>
        <taxon>Rhodopirellula</taxon>
    </lineage>
</organism>